<reference key="1">
    <citation type="journal article" date="1982" name="Sci. Sin., Ser. B Chem. Biol. Agric. Med. Earth Sci.">
        <title>Complete amino acid sequence of mung bean trypsin inhibitor.</title>
        <authorList>
            <person name="Zhang Y."/>
            <person name="Luo S."/>
            <person name="Tan F."/>
            <person name="Qi Z."/>
            <person name="Xu L."/>
            <person name="Zhang A."/>
        </authorList>
    </citation>
    <scope>PROTEIN SEQUENCE</scope>
</reference>
<reference evidence="4" key="2">
    <citation type="journal article" date="1993" name="Eur. J. Biochem.">
        <title>The 0.25-nm X-ray structure of the Bowman-Birk-type inhibitor from mung bean in ternary complex with porcine trypsin.</title>
        <authorList>
            <person name="Lin G."/>
            <person name="Bode W."/>
            <person name="Huber R."/>
            <person name="Chi C."/>
            <person name="Engh R.A."/>
        </authorList>
    </citation>
    <scope>X-RAY CRYSTALLOGRAPHY (2.50 ANGSTROMS)</scope>
    <scope>DISULFIDE BONDS</scope>
</reference>
<reference key="3">
    <citation type="journal article" date="1994" name="J. Biochem.">
        <title>Studies on an artificial trypsin inhibitor peptide derived from the mung bean trypsin inhibitor: chemical synthesis, refolding, and crystallographic analysis of its complex with trypsin.</title>
        <authorList>
            <person name="Li Y."/>
            <person name="Huang Q."/>
            <person name="Zhang S."/>
            <person name="Liu S."/>
            <person name="Qi C."/>
            <person name="Tang Y."/>
        </authorList>
    </citation>
    <scope>X-RAY CRYSTALLOGRAPHY (2.1 ANGSTROMS) OF 10-31</scope>
    <scope>SEQUENCE REVISION</scope>
    <scope>DISULFIDE BONDS</scope>
</reference>
<dbReference type="PIR" id="A01301">
    <property type="entry name" value="TIMB"/>
</dbReference>
<dbReference type="PDB" id="1G9I">
    <property type="method" value="X-ray"/>
    <property type="resolution" value="2.20 A"/>
    <property type="chains" value="I=10-31"/>
</dbReference>
<dbReference type="PDB" id="1SBW">
    <property type="method" value="X-ray"/>
    <property type="resolution" value="1.80 A"/>
    <property type="chains" value="I=8-69"/>
</dbReference>
<dbReference type="PDB" id="1SMF">
    <property type="method" value="X-ray"/>
    <property type="resolution" value="2.10 A"/>
    <property type="chains" value="I=10-31"/>
</dbReference>
<dbReference type="PDB" id="3MYW">
    <property type="method" value="X-ray"/>
    <property type="resolution" value="2.50 A"/>
    <property type="chains" value="I=1-72"/>
</dbReference>
<dbReference type="PDBsum" id="1G9I"/>
<dbReference type="PDBsum" id="1SBW"/>
<dbReference type="PDBsum" id="1SMF"/>
<dbReference type="PDBsum" id="3MYW"/>
<dbReference type="SMR" id="P01062"/>
<dbReference type="STRING" id="3916.P01062"/>
<dbReference type="MEROPS" id="I12.001"/>
<dbReference type="MEROPS" id="I12.008"/>
<dbReference type="EvolutionaryTrace" id="P01062"/>
<dbReference type="Proteomes" id="UP000087766">
    <property type="component" value="Unplaced"/>
</dbReference>
<dbReference type="GO" id="GO:0005576">
    <property type="term" value="C:extracellular region"/>
    <property type="evidence" value="ECO:0007669"/>
    <property type="project" value="InterPro"/>
</dbReference>
<dbReference type="GO" id="GO:0004867">
    <property type="term" value="F:serine-type endopeptidase inhibitor activity"/>
    <property type="evidence" value="ECO:0007669"/>
    <property type="project" value="UniProtKB-KW"/>
</dbReference>
<dbReference type="CDD" id="cd00023">
    <property type="entry name" value="BBI"/>
    <property type="match status" value="1"/>
</dbReference>
<dbReference type="FunFam" id="2.10.69.10:FF:000001">
    <property type="entry name" value="Bowman-Birk type proteinase inhibitor"/>
    <property type="match status" value="1"/>
</dbReference>
<dbReference type="Gene3D" id="2.10.69.10">
    <property type="entry name" value="Cysteine Protease (Bromelain) Inhibitor, subunit H"/>
    <property type="match status" value="1"/>
</dbReference>
<dbReference type="InterPro" id="IPR035995">
    <property type="entry name" value="Bowman-Birk_prot_inh"/>
</dbReference>
<dbReference type="InterPro" id="IPR000877">
    <property type="entry name" value="Prot_inh_BBI"/>
</dbReference>
<dbReference type="Pfam" id="PF00228">
    <property type="entry name" value="Bowman-Birk_leg"/>
    <property type="match status" value="1"/>
</dbReference>
<dbReference type="SMART" id="SM00269">
    <property type="entry name" value="BowB"/>
    <property type="match status" value="1"/>
</dbReference>
<dbReference type="SUPFAM" id="SSF57247">
    <property type="entry name" value="Bowman-Birk inhibitor, BBI"/>
    <property type="match status" value="1"/>
</dbReference>
<dbReference type="PROSITE" id="PS00281">
    <property type="entry name" value="BOWMAN_BIRK"/>
    <property type="match status" value="1"/>
</dbReference>
<sequence length="72" mass="7959">SHDEPSESSEPCCDSCDCTKSIPPECHCANIRLNSCHSACKSCICTRSMPGKCRCLDTDDFCYKPCESMDKD</sequence>
<feature type="chain" id="PRO_0000105849" description="Bowman-Birk type trypsin inhibitor">
    <location>
        <begin position="1"/>
        <end position="72"/>
    </location>
</feature>
<feature type="site" description="Reactive bond for trypsin">
    <location>
        <begin position="20"/>
        <end position="21"/>
    </location>
</feature>
<feature type="site" description="Reactive bond for trypsin">
    <location>
        <begin position="47"/>
        <end position="48"/>
    </location>
</feature>
<feature type="disulfide bond" evidence="2">
    <location>
        <begin position="12"/>
        <end position="66"/>
    </location>
</feature>
<feature type="disulfide bond" evidence="2">
    <location>
        <begin position="13"/>
        <end position="28"/>
    </location>
</feature>
<feature type="disulfide bond" evidence="2">
    <location>
        <begin position="16"/>
        <end position="62"/>
    </location>
</feature>
<feature type="disulfide bond" evidence="1">
    <location>
        <begin position="18"/>
        <end position="26"/>
    </location>
</feature>
<feature type="disulfide bond" evidence="2">
    <location>
        <begin position="36"/>
        <end position="43"/>
    </location>
</feature>
<feature type="disulfide bond" evidence="2">
    <location>
        <begin position="40"/>
        <end position="55"/>
    </location>
</feature>
<feature type="disulfide bond" evidence="2">
    <location>
        <begin position="45"/>
        <end position="53"/>
    </location>
</feature>
<feature type="sequence variant" description="In 2nd and 3rd isoinhibitor.">
    <location>
        <begin position="1"/>
        <end position="2"/>
    </location>
</feature>
<feature type="sequence variant" description="In 1st isoinhibitor.">
    <original>H</original>
    <variation>D</variation>
    <location>
        <position position="2"/>
    </location>
</feature>
<feature type="sequence variant" description="In 3rd isoinhibitor.">
    <original>D</original>
    <variation>K</variation>
    <location>
        <position position="3"/>
    </location>
</feature>
<feature type="strand" evidence="5">
    <location>
        <begin position="17"/>
        <end position="23"/>
    </location>
</feature>
<feature type="strand" evidence="6">
    <location>
        <begin position="26"/>
        <end position="28"/>
    </location>
</feature>
<feature type="strand" evidence="6">
    <location>
        <begin position="32"/>
        <end position="34"/>
    </location>
</feature>
<feature type="strand" evidence="6">
    <location>
        <begin position="43"/>
        <end position="50"/>
    </location>
</feature>
<feature type="strand" evidence="6">
    <location>
        <begin position="52"/>
        <end position="55"/>
    </location>
</feature>
<feature type="strand" evidence="6">
    <location>
        <begin position="59"/>
        <end position="61"/>
    </location>
</feature>
<keyword id="KW-0002">3D-structure</keyword>
<keyword id="KW-0903">Direct protein sequencing</keyword>
<keyword id="KW-1015">Disulfide bond</keyword>
<keyword id="KW-0646">Protease inhibitor</keyword>
<keyword id="KW-1185">Reference proteome</keyword>
<keyword id="KW-0722">Serine protease inhibitor</keyword>
<organism>
    <name type="scientific">Vigna radiata var. radiata</name>
    <name type="common">Mung bean</name>
    <name type="synonym">Phaseolus aureus</name>
    <dbReference type="NCBI Taxonomy" id="3916"/>
    <lineage>
        <taxon>Eukaryota</taxon>
        <taxon>Viridiplantae</taxon>
        <taxon>Streptophyta</taxon>
        <taxon>Embryophyta</taxon>
        <taxon>Tracheophyta</taxon>
        <taxon>Spermatophyta</taxon>
        <taxon>Magnoliopsida</taxon>
        <taxon>eudicotyledons</taxon>
        <taxon>Gunneridae</taxon>
        <taxon>Pentapetalae</taxon>
        <taxon>rosids</taxon>
        <taxon>fabids</taxon>
        <taxon>Fabales</taxon>
        <taxon>Fabaceae</taxon>
        <taxon>Papilionoideae</taxon>
        <taxon>50 kb inversion clade</taxon>
        <taxon>NPAAA clade</taxon>
        <taxon>indigoferoid/millettioid clade</taxon>
        <taxon>Phaseoleae</taxon>
        <taxon>Vigna</taxon>
    </lineage>
</organism>
<accession>P01062</accession>
<comment type="miscellaneous">
    <text>Functionally this inhibitor is unusual in that it stoichiometrically inhibits trypsin in a molar ratio of 1:2.</text>
</comment>
<comment type="miscellaneous">
    <text>The specificities and functions of this superfamily of inhibitors depend not only on the active sites within the domains, but also upon the amino acid composition, and resulting molecular conformation, surrounding these regions.</text>
</comment>
<comment type="miscellaneous">
    <text>Three isoinhibitors are also found whose amino ends differ slightly from that shown.</text>
</comment>
<comment type="similarity">
    <text evidence="3">Belongs to the Bowman-Birk serine protease inhibitor family.</text>
</comment>
<proteinExistence type="evidence at protein level"/>
<evidence type="ECO:0000269" key="1">
    <source>
    </source>
</evidence>
<evidence type="ECO:0000269" key="2">
    <source>
    </source>
</evidence>
<evidence type="ECO:0000305" key="3"/>
<evidence type="ECO:0007744" key="4">
    <source>
        <dbReference type="PDB" id="3MYW"/>
    </source>
</evidence>
<evidence type="ECO:0007829" key="5">
    <source>
        <dbReference type="PDB" id="1SBW"/>
    </source>
</evidence>
<evidence type="ECO:0007829" key="6">
    <source>
        <dbReference type="PDB" id="3MYW"/>
    </source>
</evidence>
<protein>
    <recommendedName>
        <fullName>Bowman-Birk type trypsin inhibitor</fullName>
    </recommendedName>
</protein>
<name>IBB_VIGRR</name>